<protein>
    <recommendedName>
        <fullName>Phosphoribulokinase, chloroplastic</fullName>
        <shortName>PRK</shortName>
        <shortName>PRKase</shortName>
        <ecNumber>2.7.1.19</ecNumber>
    </recommendedName>
    <alternativeName>
        <fullName>Phosphopentokinase</fullName>
    </alternativeName>
</protein>
<proteinExistence type="evidence at protein level"/>
<dbReference type="EC" id="2.7.1.19"/>
<dbReference type="SMR" id="P85112"/>
<dbReference type="UniPathway" id="UPA00116"/>
<dbReference type="GO" id="GO:0009507">
    <property type="term" value="C:chloroplast"/>
    <property type="evidence" value="ECO:0007669"/>
    <property type="project" value="UniProtKB-SubCell"/>
</dbReference>
<dbReference type="GO" id="GO:0005524">
    <property type="term" value="F:ATP binding"/>
    <property type="evidence" value="ECO:0007669"/>
    <property type="project" value="UniProtKB-KW"/>
</dbReference>
<dbReference type="GO" id="GO:0008974">
    <property type="term" value="F:phosphoribulokinase activity"/>
    <property type="evidence" value="ECO:0007669"/>
    <property type="project" value="UniProtKB-EC"/>
</dbReference>
<dbReference type="GO" id="GO:0019253">
    <property type="term" value="P:reductive pentose-phosphate cycle"/>
    <property type="evidence" value="ECO:0007669"/>
    <property type="project" value="UniProtKB-UniPathway"/>
</dbReference>
<dbReference type="InterPro" id="IPR006083">
    <property type="entry name" value="PRK/URK"/>
</dbReference>
<dbReference type="Pfam" id="PF00485">
    <property type="entry name" value="PRK"/>
    <property type="match status" value="1"/>
</dbReference>
<comment type="catalytic activity">
    <reaction evidence="6">
        <text>D-ribulose 5-phosphate + ATP = D-ribulose 1,5-bisphosphate + ADP + H(+)</text>
        <dbReference type="Rhea" id="RHEA:19365"/>
        <dbReference type="ChEBI" id="CHEBI:15378"/>
        <dbReference type="ChEBI" id="CHEBI:30616"/>
        <dbReference type="ChEBI" id="CHEBI:57870"/>
        <dbReference type="ChEBI" id="CHEBI:58121"/>
        <dbReference type="ChEBI" id="CHEBI:456216"/>
        <dbReference type="EC" id="2.7.1.19"/>
    </reaction>
</comment>
<comment type="activity regulation">
    <text evidence="6">Light regulated via thioredoxin by reversible oxidation/reduction of sulfhydryl/disulfide groups.</text>
</comment>
<comment type="pathway">
    <text evidence="6">Carbohydrate biosynthesis; Calvin cycle.</text>
</comment>
<comment type="subcellular location">
    <subcellularLocation>
        <location>Plastid</location>
        <location>Chloroplast</location>
    </subcellularLocation>
</comment>
<comment type="similarity">
    <text evidence="2">Belongs to the phosphoribulokinase family.</text>
</comment>
<feature type="chain" id="PRO_0000284766" description="Phosphoribulokinase, chloroplastic">
    <location>
        <begin position="1"/>
        <end position="89" status="greater than"/>
    </location>
</feature>
<feature type="region of interest" description="Disordered" evidence="3">
    <location>
        <begin position="1"/>
        <end position="22"/>
    </location>
</feature>
<feature type="disulfide bond" evidence="1">
    <location>
        <begin status="unknown"/>
        <end position="31"/>
    </location>
</feature>
<feature type="non-consecutive residues" evidence="5">
    <location>
        <begin position="40"/>
        <end position="41"/>
    </location>
</feature>
<feature type="non-consecutive residues" evidence="5">
    <location>
        <begin position="60"/>
        <end position="61"/>
    </location>
</feature>
<feature type="non-consecutive residues" evidence="5">
    <location>
        <begin position="72"/>
        <end position="73"/>
    </location>
</feature>
<feature type="non-terminal residue" evidence="5">
    <location>
        <position position="89"/>
    </location>
</feature>
<sequence length="89" mass="9833">LTSVFGGAAEPPRGGNPDSNTLISDTTTVICLDDYHSLDRGVTALDPRANDFDLMYEQVKKPDFDAYIDPQKLDELIYVESHLSNLSTK</sequence>
<keyword id="KW-0067">ATP-binding</keyword>
<keyword id="KW-0113">Calvin cycle</keyword>
<keyword id="KW-0150">Chloroplast</keyword>
<keyword id="KW-0903">Direct protein sequencing</keyword>
<keyword id="KW-1015">Disulfide bond</keyword>
<keyword id="KW-0418">Kinase</keyword>
<keyword id="KW-0547">Nucleotide-binding</keyword>
<keyword id="KW-0602">Photosynthesis</keyword>
<keyword id="KW-0934">Plastid</keyword>
<keyword id="KW-0808">Transferase</keyword>
<evidence type="ECO:0000250" key="1">
    <source>
        <dbReference type="UniProtKB" id="P09559"/>
    </source>
</evidence>
<evidence type="ECO:0000255" key="2"/>
<evidence type="ECO:0000256" key="3">
    <source>
        <dbReference type="SAM" id="MobiDB-lite"/>
    </source>
</evidence>
<evidence type="ECO:0000269" key="4">
    <source ref="1"/>
</evidence>
<evidence type="ECO:0000303" key="5">
    <source ref="1"/>
</evidence>
<evidence type="ECO:0000305" key="6"/>
<reference evidence="6" key="1">
    <citation type="submission" date="2007-02" db="UniProtKB">
        <title>Suppression of polypeptides in response to water stress in Florida hybrid grape.</title>
        <authorList>
            <person name="Katam R."/>
            <person name="Vasanthaiah H.K.N."/>
            <person name="Basha S.M."/>
            <person name="McClung S."/>
        </authorList>
    </citation>
    <scope>PROTEIN SEQUENCE</scope>
    <source>
        <strain evidence="4">V.aestivalis X V.lincecumi cv. Suwannee</strain>
        <tissue evidence="4">Leaf</tissue>
    </source>
</reference>
<organism>
    <name type="scientific">Vitis sp.</name>
    <name type="common">Grape</name>
    <dbReference type="NCBI Taxonomy" id="3604"/>
    <lineage>
        <taxon>Eukaryota</taxon>
        <taxon>Viridiplantae</taxon>
        <taxon>Streptophyta</taxon>
        <taxon>Embryophyta</taxon>
        <taxon>Tracheophyta</taxon>
        <taxon>Spermatophyta</taxon>
        <taxon>Magnoliopsida</taxon>
        <taxon>eudicotyledons</taxon>
        <taxon>Gunneridae</taxon>
        <taxon>Pentapetalae</taxon>
        <taxon>rosids</taxon>
        <taxon>Vitales</taxon>
        <taxon>Vitaceae</taxon>
        <taxon>Viteae</taxon>
        <taxon>Vitis</taxon>
    </lineage>
</organism>
<name>KPPR_VITSX</name>
<accession>P85112</accession>